<sequence length="157" mass="17660">MRMIQAYLCDSVSGEPYTCKGDLCEIPFNRNFTIDLVNLSVSTEFQVKITMTPHHDLGTFVVEPKNVFSIKRAVKGDAAFKVERAAGWLPDTPQVLTLFVYERLNPVEWHSECMYENLETDGGTVIVPGEATGQRFGTATEVPTMFLFKRMFVVKGV</sequence>
<protein>
    <recommendedName>
        <fullName>Immediate-early protein ICP-18</fullName>
    </recommendedName>
</protein>
<feature type="chain" id="PRO_0000222387" description="Immediate-early protein ICP-18">
    <location>
        <begin position="1"/>
        <end position="157"/>
    </location>
</feature>
<reference key="1">
    <citation type="journal article" date="1984" name="J. Virol.">
        <title>Nucleotide sequence of an immediate-early frog virus 3 gene.</title>
        <authorList>
            <person name="Willis D.B."/>
            <person name="Foglesong D."/>
            <person name="Granoff A."/>
        </authorList>
    </citation>
    <scope>NUCLEOTIDE SEQUENCE [GENOMIC DNA]</scope>
</reference>
<reference key="2">
    <citation type="journal article" date="1995" name="J. Gen. Virol.">
        <title>Identification and characterization of the frog virus 3 DNA methyltransferase gene.</title>
        <authorList>
            <person name="Kaur K."/>
            <person name="Rohozinski J."/>
            <person name="Goorha R."/>
        </authorList>
    </citation>
    <scope>NUCLEOTIDE SEQUENCE [GENOMIC DNA]</scope>
</reference>
<reference key="3">
    <citation type="journal article" date="2004" name="Virology">
        <title>Comparative genomic analyses of frog virus 3, type species of the genus Ranavirus (family Iridoviridae).</title>
        <authorList>
            <person name="Tan W.G."/>
            <person name="Barkman T.J."/>
            <person name="Gregory Chinchar V."/>
            <person name="Essani K."/>
        </authorList>
    </citation>
    <scope>NUCLEOTIDE SEQUENCE [LARGE SCALE GENOMIC DNA]</scope>
</reference>
<dbReference type="EMBL" id="K02377">
    <property type="protein sequence ID" value="AAA43825.1"/>
    <property type="molecule type" value="Genomic_DNA"/>
</dbReference>
<dbReference type="EMBL" id="U15575">
    <property type="protein sequence ID" value="AAA86958.1"/>
    <property type="molecule type" value="Genomic_DNA"/>
</dbReference>
<dbReference type="EMBL" id="AY548484">
    <property type="protein sequence ID" value="AAT09742.1"/>
    <property type="molecule type" value="Genomic_DNA"/>
</dbReference>
<dbReference type="PIR" id="A03896">
    <property type="entry name" value="EDXF3"/>
</dbReference>
<dbReference type="RefSeq" id="YP_031661.1">
    <property type="nucleotide sequence ID" value="NC_005946.1"/>
</dbReference>
<dbReference type="KEGG" id="vg:2947801"/>
<dbReference type="Proteomes" id="UP000008770">
    <property type="component" value="Segment"/>
</dbReference>
<dbReference type="InterPro" id="IPR022600">
    <property type="entry name" value="Frog_virus-3_Orf82R"/>
</dbReference>
<dbReference type="Pfam" id="PF11135">
    <property type="entry name" value="DUF2888"/>
    <property type="match status" value="1"/>
</dbReference>
<keyword id="KW-0244">Early protein</keyword>
<keyword id="KW-1185">Reference proteome</keyword>
<name>ICP18_FRG3G</name>
<gene>
    <name type="ORF">FV3-082R</name>
</gene>
<proteinExistence type="predicted"/>
<accession>P03298</accession>
<accession>Q6GZP3</accession>
<organism>
    <name type="scientific">Frog virus 3 (isolate Goorha)</name>
    <name type="common">FV-3</name>
    <dbReference type="NCBI Taxonomy" id="654924"/>
    <lineage>
        <taxon>Viruses</taxon>
        <taxon>Varidnaviria</taxon>
        <taxon>Bamfordvirae</taxon>
        <taxon>Nucleocytoviricota</taxon>
        <taxon>Megaviricetes</taxon>
        <taxon>Pimascovirales</taxon>
        <taxon>Iridoviridae</taxon>
        <taxon>Alphairidovirinae</taxon>
        <taxon>Ranavirus</taxon>
        <taxon>Frog virus 3</taxon>
    </lineage>
</organism>
<organismHost>
    <name type="scientific">Dryophytes versicolor</name>
    <name type="common">chameleon treefrog</name>
    <dbReference type="NCBI Taxonomy" id="30343"/>
</organismHost>
<organismHost>
    <name type="scientific">Lithobates pipiens</name>
    <name type="common">Northern leopard frog</name>
    <name type="synonym">Rana pipiens</name>
    <dbReference type="NCBI Taxonomy" id="8404"/>
</organismHost>
<organismHost>
    <name type="scientific">Lithobates sylvaticus</name>
    <name type="common">Wood frog</name>
    <name type="synonym">Rana sylvatica</name>
    <dbReference type="NCBI Taxonomy" id="45438"/>
</organismHost>
<organismHost>
    <name type="scientific">Notophthalmus viridescens</name>
    <name type="common">Eastern newt</name>
    <name type="synonym">Triturus viridescens</name>
    <dbReference type="NCBI Taxonomy" id="8316"/>
</organismHost>